<organism>
    <name type="scientific">Rhodopseudomonas palustris (strain ATCC BAA-98 / CGA009)</name>
    <dbReference type="NCBI Taxonomy" id="258594"/>
    <lineage>
        <taxon>Bacteria</taxon>
        <taxon>Pseudomonadati</taxon>
        <taxon>Pseudomonadota</taxon>
        <taxon>Alphaproteobacteria</taxon>
        <taxon>Hyphomicrobiales</taxon>
        <taxon>Nitrobacteraceae</taxon>
        <taxon>Rhodopseudomonas</taxon>
    </lineage>
</organism>
<comment type="function">
    <text evidence="1">Could be involved in insertion of integral membrane proteins into the membrane.</text>
</comment>
<comment type="subcellular location">
    <subcellularLocation>
        <location evidence="1">Cell inner membrane</location>
        <topology evidence="1">Peripheral membrane protein</topology>
        <orientation evidence="1">Cytoplasmic side</orientation>
    </subcellularLocation>
</comment>
<comment type="similarity">
    <text evidence="1">Belongs to the UPF0161 family.</text>
</comment>
<comment type="sequence caution" evidence="2">
    <conflict type="erroneous initiation">
        <sequence resource="EMBL-CDS" id="CAE28835"/>
    </conflict>
</comment>
<name>YIDD_RHOPA</name>
<keyword id="KW-0997">Cell inner membrane</keyword>
<keyword id="KW-1003">Cell membrane</keyword>
<keyword id="KW-0472">Membrane</keyword>
<dbReference type="EMBL" id="BX572603">
    <property type="protein sequence ID" value="CAE28835.1"/>
    <property type="status" value="ALT_INIT"/>
    <property type="molecule type" value="Genomic_DNA"/>
</dbReference>
<dbReference type="RefSeq" id="WP_042441186.1">
    <property type="nucleotide sequence ID" value="NZ_CP116810.1"/>
</dbReference>
<dbReference type="SMR" id="P61471"/>
<dbReference type="STRING" id="258594.RPA3394"/>
<dbReference type="GeneID" id="66894484"/>
<dbReference type="eggNOG" id="COG0759">
    <property type="taxonomic scope" value="Bacteria"/>
</dbReference>
<dbReference type="HOGENOM" id="CLU_144811_0_0_5"/>
<dbReference type="PhylomeDB" id="P61471"/>
<dbReference type="GO" id="GO:0005886">
    <property type="term" value="C:plasma membrane"/>
    <property type="evidence" value="ECO:0007669"/>
    <property type="project" value="UniProtKB-SubCell"/>
</dbReference>
<dbReference type="HAMAP" id="MF_00386">
    <property type="entry name" value="UPF0161_YidD"/>
    <property type="match status" value="1"/>
</dbReference>
<dbReference type="InterPro" id="IPR002696">
    <property type="entry name" value="Membr_insert_effic_factor_YidD"/>
</dbReference>
<dbReference type="NCBIfam" id="TIGR00278">
    <property type="entry name" value="membrane protein insertion efficiency factor YidD"/>
    <property type="match status" value="1"/>
</dbReference>
<dbReference type="PANTHER" id="PTHR33383">
    <property type="entry name" value="MEMBRANE PROTEIN INSERTION EFFICIENCY FACTOR-RELATED"/>
    <property type="match status" value="1"/>
</dbReference>
<dbReference type="PANTHER" id="PTHR33383:SF1">
    <property type="entry name" value="MEMBRANE PROTEIN INSERTION EFFICIENCY FACTOR-RELATED"/>
    <property type="match status" value="1"/>
</dbReference>
<dbReference type="Pfam" id="PF01809">
    <property type="entry name" value="YidD"/>
    <property type="match status" value="1"/>
</dbReference>
<dbReference type="SMART" id="SM01234">
    <property type="entry name" value="Haemolytic"/>
    <property type="match status" value="1"/>
</dbReference>
<protein>
    <recommendedName>
        <fullName evidence="1">Putative membrane protein insertion efficiency factor</fullName>
    </recommendedName>
</protein>
<reference key="1">
    <citation type="journal article" date="2004" name="Nat. Biotechnol.">
        <title>Complete genome sequence of the metabolically versatile photosynthetic bacterium Rhodopseudomonas palustris.</title>
        <authorList>
            <person name="Larimer F.W."/>
            <person name="Chain P."/>
            <person name="Hauser L."/>
            <person name="Lamerdin J.E."/>
            <person name="Malfatti S."/>
            <person name="Do L."/>
            <person name="Land M.L."/>
            <person name="Pelletier D.A."/>
            <person name="Beatty J.T."/>
            <person name="Lang A.S."/>
            <person name="Tabita F.R."/>
            <person name="Gibson J.L."/>
            <person name="Hanson T.E."/>
            <person name="Bobst C."/>
            <person name="Torres y Torres J.L."/>
            <person name="Peres C."/>
            <person name="Harrison F.H."/>
            <person name="Gibson J."/>
            <person name="Harwood C.S."/>
        </authorList>
    </citation>
    <scope>NUCLEOTIDE SEQUENCE [LARGE SCALE GENOMIC DNA]</scope>
    <source>
        <strain>ATCC BAA-98 / CGA009</strain>
    </source>
</reference>
<sequence length="129" mass="14673">MQLPSRGTDWIAQVLRLPRNAGRGLIWLYRHTLSPLVGYNCRHYPTCSMYGDEAIRKFGLWAGGWMTLARLLRCQPWGTSGIDLVPQTAPSRARWYLPWRYARWRGVNAPPPDVAEPCGCGSHSQLTPH</sequence>
<accession>P61471</accession>
<feature type="chain" id="PRO_0000171861" description="Putative membrane protein insertion efficiency factor">
    <location>
        <begin position="1"/>
        <end position="129"/>
    </location>
</feature>
<gene>
    <name type="ordered locus">RPA3394</name>
</gene>
<proteinExistence type="inferred from homology"/>
<evidence type="ECO:0000255" key="1">
    <source>
        <dbReference type="HAMAP-Rule" id="MF_00386"/>
    </source>
</evidence>
<evidence type="ECO:0000305" key="2"/>